<protein>
    <recommendedName>
        <fullName>Cytochrome P450 2G1</fullName>
        <ecNumber>1.14.14.1</ecNumber>
    </recommendedName>
    <alternativeName>
        <fullName>CYPIIG1</fullName>
    </alternativeName>
    <alternativeName>
        <fullName>Cytochrome P450 olfactive</fullName>
    </alternativeName>
    <alternativeName>
        <fullName>Cytochrome P450-OLF1</fullName>
    </alternativeName>
</protein>
<sequence>MALGGAFSIFMTLCLSCLLILIAWKRTSRGGKLPPGPTPIPFLGNLLQVRIDATFQSFLKLQKKYGSVFTVYFGPRPVVILCGHEAVKEALVDQADDFSGRGEMPTLEKNFQGYGLALSNGERWKILRRFSLTVLRNFGMGKRSIEERIQEEAGYLLEELHKVKGAPIDPTFYLSRTVSNVICSVVFGKRFDYEDQRFRSLMKMINESFVEMSMPWAQLYDMYWGVIQYFPGRHNRLYNLIEELKDFIASRVKINEASFDPSNPRDFIDCFLIKMYQDKSDPHSEFNLKNLVLTTLNLFFAGTETVSSTLRYGFLLLMKYPEVEAKIHEEINQVIGTHRTPRVDDRAKMPYTDAVIHEIQRLTDIVPLGVPHNVIRDTHFRGYFLPKGTDVYPLIGSVLKDPKYFRYPEAFYPQHFLDEQGRFKKNDAFVAFSSGKRICVGEALARMELFLYFTSILQRFSLRSLVPPADIDIAHKISGFGNIPPTYELCFMAR</sequence>
<reference key="1">
    <citation type="journal article" date="1990" name="J. Biol. Chem.">
        <title>Olfactory-specific cytochrome P-450 (P-450olf1; IIG1). Gene structure and developmental regulation.</title>
        <authorList>
            <person name="Nef P."/>
            <person name="Larabee T.M."/>
            <person name="Kagimoto K."/>
            <person name="Meyer U.A."/>
        </authorList>
    </citation>
    <scope>NUCLEOTIDE SEQUENCE [GENOMIC DNA]</scope>
</reference>
<reference key="2">
    <citation type="journal article" date="1989" name="J. Biol. Chem.">
        <title>Olfactory-specific cytochrome P-450. cDNA cloning of a novel neuroepithelial enzyme possibly involved in chemoreception.</title>
        <authorList>
            <person name="Nef P."/>
            <person name="Heldman J."/>
            <person name="Lazard D."/>
            <person name="Margalit T."/>
            <person name="Jaye M."/>
            <person name="Hanukoglu I."/>
            <person name="Lancet D."/>
        </authorList>
    </citation>
    <scope>NUCLEOTIDE SEQUENCE OF 2-494</scope>
</reference>
<dbReference type="EC" id="1.14.14.1"/>
<dbReference type="EMBL" id="M31931">
    <property type="protein sequence ID" value="AAA41069.1"/>
    <property type="molecule type" value="Genomic_DNA"/>
</dbReference>
<dbReference type="EMBL" id="M31923">
    <property type="protein sequence ID" value="AAA41069.1"/>
    <property type="status" value="JOINED"/>
    <property type="molecule type" value="Genomic_DNA"/>
</dbReference>
<dbReference type="EMBL" id="M31924">
    <property type="protein sequence ID" value="AAA41069.1"/>
    <property type="status" value="JOINED"/>
    <property type="molecule type" value="Genomic_DNA"/>
</dbReference>
<dbReference type="EMBL" id="M31925">
    <property type="protein sequence ID" value="AAA41069.1"/>
    <property type="status" value="JOINED"/>
    <property type="molecule type" value="Genomic_DNA"/>
</dbReference>
<dbReference type="EMBL" id="M31926">
    <property type="protein sequence ID" value="AAA41069.1"/>
    <property type="status" value="JOINED"/>
    <property type="molecule type" value="Genomic_DNA"/>
</dbReference>
<dbReference type="EMBL" id="M31927">
    <property type="protein sequence ID" value="AAA41069.1"/>
    <property type="status" value="JOINED"/>
    <property type="molecule type" value="Genomic_DNA"/>
</dbReference>
<dbReference type="EMBL" id="M31928">
    <property type="protein sequence ID" value="AAA41069.1"/>
    <property type="status" value="JOINED"/>
    <property type="molecule type" value="Genomic_DNA"/>
</dbReference>
<dbReference type="EMBL" id="M31929">
    <property type="protein sequence ID" value="AAA41069.1"/>
    <property type="status" value="JOINED"/>
    <property type="molecule type" value="Genomic_DNA"/>
</dbReference>
<dbReference type="EMBL" id="M31930">
    <property type="protein sequence ID" value="AAA41069.1"/>
    <property type="status" value="JOINED"/>
    <property type="molecule type" value="Genomic_DNA"/>
</dbReference>
<dbReference type="EMBL" id="M33296">
    <property type="protein sequence ID" value="AAA41070.2"/>
    <property type="molecule type" value="mRNA"/>
</dbReference>
<dbReference type="PIR" id="A35551">
    <property type="entry name" value="A35551"/>
</dbReference>
<dbReference type="RefSeq" id="NP_036919.1">
    <property type="nucleotide sequence ID" value="NM_012787.2"/>
</dbReference>
<dbReference type="SMR" id="P10610"/>
<dbReference type="FunCoup" id="P10610">
    <property type="interactions" value="55"/>
</dbReference>
<dbReference type="STRING" id="10116.ENSRNOP00000028261"/>
<dbReference type="GlyGen" id="P10610">
    <property type="glycosylation" value="1 site"/>
</dbReference>
<dbReference type="PhosphoSitePlus" id="P10610"/>
<dbReference type="PaxDb" id="10116-ENSRNOP00000028261"/>
<dbReference type="DNASU" id="25251"/>
<dbReference type="Ensembl" id="ENSRNOT00000102573.1">
    <property type="protein sequence ID" value="ENSRNOP00000083307.1"/>
    <property type="gene ID" value="ENSRNOG00000020827.6"/>
</dbReference>
<dbReference type="GeneID" id="25251"/>
<dbReference type="KEGG" id="rno:25251"/>
<dbReference type="UCSC" id="RGD:2477">
    <property type="organism name" value="rat"/>
</dbReference>
<dbReference type="AGR" id="RGD:2477"/>
<dbReference type="CTD" id="13108"/>
<dbReference type="RGD" id="2477">
    <property type="gene designation" value="Cyp2g1"/>
</dbReference>
<dbReference type="eggNOG" id="KOG0156">
    <property type="taxonomic scope" value="Eukaryota"/>
</dbReference>
<dbReference type="GeneTree" id="ENSGT00940000161670"/>
<dbReference type="HOGENOM" id="CLU_001570_22_0_1"/>
<dbReference type="InParanoid" id="P10610"/>
<dbReference type="OMA" id="IPPTYKL"/>
<dbReference type="OrthoDB" id="3934656at2759"/>
<dbReference type="PhylomeDB" id="P10610"/>
<dbReference type="TreeFam" id="TF352043"/>
<dbReference type="PRO" id="PR:P10610"/>
<dbReference type="Proteomes" id="UP000002494">
    <property type="component" value="Chromosome 1"/>
</dbReference>
<dbReference type="Bgee" id="ENSRNOG00000020827">
    <property type="expression patterns" value="Expressed in testis and 1 other cell type or tissue"/>
</dbReference>
<dbReference type="GO" id="GO:0005737">
    <property type="term" value="C:cytoplasm"/>
    <property type="evidence" value="ECO:0000318"/>
    <property type="project" value="GO_Central"/>
</dbReference>
<dbReference type="GO" id="GO:0005789">
    <property type="term" value="C:endoplasmic reticulum membrane"/>
    <property type="evidence" value="ECO:0007669"/>
    <property type="project" value="UniProtKB-SubCell"/>
</dbReference>
<dbReference type="GO" id="GO:0043231">
    <property type="term" value="C:intracellular membrane-bounded organelle"/>
    <property type="evidence" value="ECO:0000318"/>
    <property type="project" value="GO_Central"/>
</dbReference>
<dbReference type="GO" id="GO:0008392">
    <property type="term" value="F:arachidonate epoxygenase activity"/>
    <property type="evidence" value="ECO:0000318"/>
    <property type="project" value="GO_Central"/>
</dbReference>
<dbReference type="GO" id="GO:0020037">
    <property type="term" value="F:heme binding"/>
    <property type="evidence" value="ECO:0000318"/>
    <property type="project" value="GO_Central"/>
</dbReference>
<dbReference type="GO" id="GO:0005506">
    <property type="term" value="F:iron ion binding"/>
    <property type="evidence" value="ECO:0007669"/>
    <property type="project" value="InterPro"/>
</dbReference>
<dbReference type="GO" id="GO:0004497">
    <property type="term" value="F:monooxygenase activity"/>
    <property type="evidence" value="ECO:0000304"/>
    <property type="project" value="RGD"/>
</dbReference>
<dbReference type="GO" id="GO:0016712">
    <property type="term" value="F:oxidoreductase activity, acting on paired donors, with incorporation or reduction of molecular oxygen, reduced flavin or flavoprotein as one donor, and incorporation of one atom of oxygen"/>
    <property type="evidence" value="ECO:0000318"/>
    <property type="project" value="GO_Central"/>
</dbReference>
<dbReference type="GO" id="GO:0019373">
    <property type="term" value="P:epoxygenase P450 pathway"/>
    <property type="evidence" value="ECO:0000318"/>
    <property type="project" value="GO_Central"/>
</dbReference>
<dbReference type="GO" id="GO:0007608">
    <property type="term" value="P:sensory perception of smell"/>
    <property type="evidence" value="ECO:0007669"/>
    <property type="project" value="UniProtKB-KW"/>
</dbReference>
<dbReference type="GO" id="GO:0006805">
    <property type="term" value="P:xenobiotic metabolic process"/>
    <property type="evidence" value="ECO:0000318"/>
    <property type="project" value="GO_Central"/>
</dbReference>
<dbReference type="CDD" id="cd20670">
    <property type="entry name" value="CYP2G"/>
    <property type="match status" value="1"/>
</dbReference>
<dbReference type="FunFam" id="1.10.630.10:FF:000001">
    <property type="entry name" value="Cytochrome P450, family 2"/>
    <property type="match status" value="1"/>
</dbReference>
<dbReference type="Gene3D" id="1.10.630.10">
    <property type="entry name" value="Cytochrome P450"/>
    <property type="match status" value="1"/>
</dbReference>
<dbReference type="InterPro" id="IPR001128">
    <property type="entry name" value="Cyt_P450"/>
</dbReference>
<dbReference type="InterPro" id="IPR017972">
    <property type="entry name" value="Cyt_P450_CS"/>
</dbReference>
<dbReference type="InterPro" id="IPR002401">
    <property type="entry name" value="Cyt_P450_E_grp-I"/>
</dbReference>
<dbReference type="InterPro" id="IPR008067">
    <property type="entry name" value="Cyt_P450_E_grp-I_CYP2A-like"/>
</dbReference>
<dbReference type="InterPro" id="IPR036396">
    <property type="entry name" value="Cyt_P450_sf"/>
</dbReference>
<dbReference type="InterPro" id="IPR050182">
    <property type="entry name" value="Cytochrome_P450_fam2"/>
</dbReference>
<dbReference type="PANTHER" id="PTHR24300:SF424">
    <property type="entry name" value="CYTOCHROME P450"/>
    <property type="match status" value="1"/>
</dbReference>
<dbReference type="PANTHER" id="PTHR24300">
    <property type="entry name" value="CYTOCHROME P450 508A4-RELATED"/>
    <property type="match status" value="1"/>
</dbReference>
<dbReference type="Pfam" id="PF00067">
    <property type="entry name" value="p450"/>
    <property type="match status" value="1"/>
</dbReference>
<dbReference type="PRINTS" id="PR00463">
    <property type="entry name" value="EP450I"/>
</dbReference>
<dbReference type="PRINTS" id="PR01684">
    <property type="entry name" value="EP450ICYP2A"/>
</dbReference>
<dbReference type="PRINTS" id="PR00385">
    <property type="entry name" value="P450"/>
</dbReference>
<dbReference type="SUPFAM" id="SSF48264">
    <property type="entry name" value="Cytochrome P450"/>
    <property type="match status" value="1"/>
</dbReference>
<dbReference type="PROSITE" id="PS00086">
    <property type="entry name" value="CYTOCHROME_P450"/>
    <property type="match status" value="1"/>
</dbReference>
<organism>
    <name type="scientific">Rattus norvegicus</name>
    <name type="common">Rat</name>
    <dbReference type="NCBI Taxonomy" id="10116"/>
    <lineage>
        <taxon>Eukaryota</taxon>
        <taxon>Metazoa</taxon>
        <taxon>Chordata</taxon>
        <taxon>Craniata</taxon>
        <taxon>Vertebrata</taxon>
        <taxon>Euteleostomi</taxon>
        <taxon>Mammalia</taxon>
        <taxon>Eutheria</taxon>
        <taxon>Euarchontoglires</taxon>
        <taxon>Glires</taxon>
        <taxon>Rodentia</taxon>
        <taxon>Myomorpha</taxon>
        <taxon>Muroidea</taxon>
        <taxon>Muridae</taxon>
        <taxon>Murinae</taxon>
        <taxon>Rattus</taxon>
    </lineage>
</organism>
<accession>P10610</accession>
<accession>Q64589</accession>
<name>CP2G1_RAT</name>
<comment type="function">
    <text>Cytochromes P450 are a group of heme-thiolate monooxygenases. This isozyme seems to be implicated in olfaction.</text>
</comment>
<comment type="catalytic activity">
    <reaction>
        <text>an organic molecule + reduced [NADPH--hemoprotein reductase] + O2 = an alcohol + oxidized [NADPH--hemoprotein reductase] + H2O + H(+)</text>
        <dbReference type="Rhea" id="RHEA:17149"/>
        <dbReference type="Rhea" id="RHEA-COMP:11964"/>
        <dbReference type="Rhea" id="RHEA-COMP:11965"/>
        <dbReference type="ChEBI" id="CHEBI:15377"/>
        <dbReference type="ChEBI" id="CHEBI:15378"/>
        <dbReference type="ChEBI" id="CHEBI:15379"/>
        <dbReference type="ChEBI" id="CHEBI:30879"/>
        <dbReference type="ChEBI" id="CHEBI:57618"/>
        <dbReference type="ChEBI" id="CHEBI:58210"/>
        <dbReference type="ChEBI" id="CHEBI:142491"/>
        <dbReference type="EC" id="1.14.14.1"/>
    </reaction>
</comment>
<comment type="cofactor">
    <cofactor evidence="1">
        <name>heme</name>
        <dbReference type="ChEBI" id="CHEBI:30413"/>
    </cofactor>
</comment>
<comment type="subcellular location">
    <subcellularLocation>
        <location>Endoplasmic reticulum membrane</location>
        <topology>Peripheral membrane protein</topology>
    </subcellularLocation>
    <subcellularLocation>
        <location>Microsome membrane</location>
        <topology>Peripheral membrane protein</topology>
    </subcellularLocation>
</comment>
<comment type="tissue specificity">
    <text>Olfactory epithelium.</text>
</comment>
<comment type="similarity">
    <text evidence="2">Belongs to the cytochrome P450 family.</text>
</comment>
<proteinExistence type="evidence at transcript level"/>
<gene>
    <name type="primary">Cyp2g1</name>
    <name type="synonym">Cyp2g-1</name>
</gene>
<evidence type="ECO:0000250" key="1"/>
<evidence type="ECO:0000305" key="2"/>
<keyword id="KW-0256">Endoplasmic reticulum</keyword>
<keyword id="KW-0349">Heme</keyword>
<keyword id="KW-0408">Iron</keyword>
<keyword id="KW-0472">Membrane</keyword>
<keyword id="KW-0479">Metal-binding</keyword>
<keyword id="KW-0492">Microsome</keyword>
<keyword id="KW-0503">Monooxygenase</keyword>
<keyword id="KW-0552">Olfaction</keyword>
<keyword id="KW-0560">Oxidoreductase</keyword>
<keyword id="KW-1185">Reference proteome</keyword>
<keyword id="KW-0716">Sensory transduction</keyword>
<feature type="chain" id="PRO_0000051765" description="Cytochrome P450 2G1">
    <location>
        <begin position="1"/>
        <end position="494"/>
    </location>
</feature>
<feature type="binding site" description="axial binding residue" evidence="1">
    <location>
        <position position="439"/>
    </location>
    <ligand>
        <name>heme</name>
        <dbReference type="ChEBI" id="CHEBI:30413"/>
    </ligand>
    <ligandPart>
        <name>Fe</name>
        <dbReference type="ChEBI" id="CHEBI:18248"/>
    </ligandPart>
</feature>